<dbReference type="EC" id="1.5.1.56" evidence="2"/>
<dbReference type="EMBL" id="MF770509">
    <property type="protein sequence ID" value="AVM85917.1"/>
    <property type="molecule type" value="mRNA"/>
</dbReference>
<dbReference type="SMR" id="A0A2P1GIW4"/>
<dbReference type="KEGG" id="ag:AVM85917"/>
<dbReference type="BioCyc" id="MetaCyc:MONOMER-20646"/>
<dbReference type="GO" id="GO:0016616">
    <property type="term" value="F:oxidoreductase activity, acting on the CH-OH group of donors, NAD or NADP as acceptor"/>
    <property type="evidence" value="ECO:0007669"/>
    <property type="project" value="InterPro"/>
</dbReference>
<dbReference type="GO" id="GO:0008270">
    <property type="term" value="F:zinc ion binding"/>
    <property type="evidence" value="ECO:0007669"/>
    <property type="project" value="InterPro"/>
</dbReference>
<dbReference type="GO" id="GO:0009820">
    <property type="term" value="P:alkaloid metabolic process"/>
    <property type="evidence" value="ECO:0007669"/>
    <property type="project" value="UniProtKB-KW"/>
</dbReference>
<dbReference type="CDD" id="cd05283">
    <property type="entry name" value="CAD1"/>
    <property type="match status" value="1"/>
</dbReference>
<dbReference type="FunFam" id="3.40.50.720:FF:000022">
    <property type="entry name" value="Cinnamyl alcohol dehydrogenase"/>
    <property type="match status" value="1"/>
</dbReference>
<dbReference type="FunFam" id="3.90.180.10:FF:000004">
    <property type="entry name" value="probable cinnamyl alcohol dehydrogenase"/>
    <property type="match status" value="1"/>
</dbReference>
<dbReference type="Gene3D" id="3.90.180.10">
    <property type="entry name" value="Medium-chain alcohol dehydrogenases, catalytic domain"/>
    <property type="match status" value="1"/>
</dbReference>
<dbReference type="Gene3D" id="3.40.50.720">
    <property type="entry name" value="NAD(P)-binding Rossmann-like Domain"/>
    <property type="match status" value="1"/>
</dbReference>
<dbReference type="InterPro" id="IPR013149">
    <property type="entry name" value="ADH-like_C"/>
</dbReference>
<dbReference type="InterPro" id="IPR013154">
    <property type="entry name" value="ADH-like_N"/>
</dbReference>
<dbReference type="InterPro" id="IPR002328">
    <property type="entry name" value="ADH_Zn_CS"/>
</dbReference>
<dbReference type="InterPro" id="IPR047109">
    <property type="entry name" value="CAD-like"/>
</dbReference>
<dbReference type="InterPro" id="IPR011032">
    <property type="entry name" value="GroES-like_sf"/>
</dbReference>
<dbReference type="InterPro" id="IPR036291">
    <property type="entry name" value="NAD(P)-bd_dom_sf"/>
</dbReference>
<dbReference type="InterPro" id="IPR020843">
    <property type="entry name" value="PKS_ER"/>
</dbReference>
<dbReference type="PANTHER" id="PTHR42683">
    <property type="entry name" value="ALDEHYDE REDUCTASE"/>
    <property type="match status" value="1"/>
</dbReference>
<dbReference type="Pfam" id="PF08240">
    <property type="entry name" value="ADH_N"/>
    <property type="match status" value="1"/>
</dbReference>
<dbReference type="Pfam" id="PF00107">
    <property type="entry name" value="ADH_zinc_N"/>
    <property type="match status" value="1"/>
</dbReference>
<dbReference type="SMART" id="SM00829">
    <property type="entry name" value="PKS_ER"/>
    <property type="match status" value="1"/>
</dbReference>
<dbReference type="SUPFAM" id="SSF50129">
    <property type="entry name" value="GroES-like"/>
    <property type="match status" value="1"/>
</dbReference>
<dbReference type="SUPFAM" id="SSF51735">
    <property type="entry name" value="NAD(P)-binding Rossmann-fold domains"/>
    <property type="match status" value="1"/>
</dbReference>
<dbReference type="PROSITE" id="PS00059">
    <property type="entry name" value="ADH_ZINC"/>
    <property type="match status" value="1"/>
</dbReference>
<reference key="1">
    <citation type="journal article" date="2018" name="Proc. Natl. Acad. Sci. U.S.A.">
        <title>Solution of the multistep pathway for assembly of corynanthean, strychnos, iboga, and aspidosperma monoterpenoid indole alkaloids from 19E-geissoschizine.</title>
        <authorList>
            <person name="Qu Y."/>
            <person name="Easson M.E.A.M."/>
            <person name="Simionescu R."/>
            <person name="Hajicek J."/>
            <person name="Thamm A.M.K."/>
            <person name="Salim V."/>
            <person name="De Luca V."/>
        </authorList>
    </citation>
    <scope>NUCLEOTIDE SEQUENCE [MRNA]</scope>
    <scope>FUNCTION</scope>
    <scope>DISRUPTION PHENOTYPE</scope>
    <scope>CATALYTIC ACTIVITY</scope>
    <scope>PATHWAY</scope>
</reference>
<reference key="2">
    <citation type="journal article" date="2019" name="Plant J.">
        <title>Completion of the canonical pathway for assembly of anticancer drugs vincristine/vinblastine in Catharanthus roseus.</title>
        <authorList>
            <person name="Qu Y."/>
            <person name="Safonova O."/>
            <person name="De Luca V."/>
        </authorList>
    </citation>
    <scope>TISSUE SPECIFICITY</scope>
    <source>
        <strain>cv. Little Delicata</strain>
    </source>
</reference>
<comment type="function">
    <text evidence="2 3">Component of iboga and aspidosperma monoterpenoid indole alkaloids (MIAs, e.g. tabersonine and catharanthine) biosynthesis pathway from 19E-geissoschizine. Catalyzes the first oxidation step of the unstable intermediate product resulting from the reaction triggered by the geissoschizine oxidase (GO) in the stemmadenine biosynthesis process from 19E-geissoschizine.</text>
</comment>
<comment type="catalytic activity">
    <reaction evidence="2">
        <text>3,17-didehydrostemmadenine + NADPH + H2O = (16S)-deshydroxymethyl-stemmadenine + formate + NADP(+)</text>
        <dbReference type="Rhea" id="RHEA:58524"/>
        <dbReference type="ChEBI" id="CHEBI:15377"/>
        <dbReference type="ChEBI" id="CHEBI:15740"/>
        <dbReference type="ChEBI" id="CHEBI:57783"/>
        <dbReference type="ChEBI" id="CHEBI:58349"/>
        <dbReference type="ChEBI" id="CHEBI:142668"/>
        <dbReference type="ChEBI" id="CHEBI:142671"/>
    </reaction>
    <physiologicalReaction direction="left-to-right" evidence="2">
        <dbReference type="Rhea" id="RHEA:58525"/>
    </physiologicalReaction>
</comment>
<comment type="catalytic activity">
    <reaction evidence="2">
        <text>3,17-didehydrostemmadenine + NADPH + H2O = (16R)-deshydroxymethyl-stemmadenine + formate + NADP(+)</text>
        <dbReference type="Rhea" id="RHEA:58528"/>
        <dbReference type="ChEBI" id="CHEBI:15377"/>
        <dbReference type="ChEBI" id="CHEBI:15740"/>
        <dbReference type="ChEBI" id="CHEBI:57783"/>
        <dbReference type="ChEBI" id="CHEBI:58349"/>
        <dbReference type="ChEBI" id="CHEBI:142668"/>
        <dbReference type="ChEBI" id="CHEBI:142670"/>
    </reaction>
    <physiologicalReaction direction="left-to-right" evidence="2">
        <dbReference type="Rhea" id="RHEA:58529"/>
    </physiologicalReaction>
</comment>
<comment type="catalytic activity">
    <reaction evidence="2">
        <text>17-dehydrostemmadenine + NADP(+) = 3,17-didehydrostemmadenine + NADPH</text>
        <dbReference type="Rhea" id="RHEA:58560"/>
        <dbReference type="ChEBI" id="CHEBI:57783"/>
        <dbReference type="ChEBI" id="CHEBI:58349"/>
        <dbReference type="ChEBI" id="CHEBI:142667"/>
        <dbReference type="ChEBI" id="CHEBI:142668"/>
        <dbReference type="EC" id="1.5.1.56"/>
    </reaction>
    <physiologicalReaction direction="right-to-left" evidence="2">
        <dbReference type="Rhea" id="RHEA:58562"/>
    </physiologicalReaction>
</comment>
<comment type="cofactor">
    <cofactor evidence="1">
        <name>Zn(2+)</name>
        <dbReference type="ChEBI" id="CHEBI:29105"/>
    </cofactor>
    <text evidence="1">Binds 2 Zn(2+) ions per subunit.</text>
</comment>
<comment type="pathway">
    <text evidence="2">Alkaloid biosynthesis.</text>
</comment>
<comment type="tissue specificity">
    <text evidence="3">Expressed in leaf epidermis.</text>
</comment>
<comment type="disruption phenotype">
    <text evidence="2">Reduced accumulation of catharanthine and vindoline, but accumulation of akuammicine and short-lived MIA.</text>
</comment>
<comment type="similarity">
    <text evidence="5">Belongs to the zinc-containing alcohol dehydrogenase family.</text>
</comment>
<comment type="online information" name="ORCAE database">
    <link uri="https://orcae.psb.ugent.be/taxa/catro/regular/v1/"/>
</comment>
<feature type="chain" id="PRO_0000446420" description="Protein REDOX 1">
    <location>
        <begin position="1"/>
        <end position="354"/>
    </location>
</feature>
<feature type="binding site" evidence="1">
    <location>
        <position position="44"/>
    </location>
    <ligand>
        <name>Zn(2+)</name>
        <dbReference type="ChEBI" id="CHEBI:29105"/>
        <label>1</label>
        <note>catalytic</note>
    </ligand>
</feature>
<feature type="binding site" evidence="1">
    <location>
        <begin position="45"/>
        <end position="49"/>
    </location>
    <ligand>
        <name>NAD(+)</name>
        <dbReference type="ChEBI" id="CHEBI:57540"/>
    </ligand>
</feature>
<feature type="binding site" evidence="1">
    <location>
        <position position="66"/>
    </location>
    <ligand>
        <name>Zn(2+)</name>
        <dbReference type="ChEBI" id="CHEBI:29105"/>
        <label>1</label>
        <note>catalytic</note>
    </ligand>
</feature>
<feature type="binding site" evidence="1">
    <location>
        <position position="97"/>
    </location>
    <ligand>
        <name>Zn(2+)</name>
        <dbReference type="ChEBI" id="CHEBI:29105"/>
        <label>2</label>
    </ligand>
</feature>
<feature type="binding site" evidence="1">
    <location>
        <position position="100"/>
    </location>
    <ligand>
        <name>Zn(2+)</name>
        <dbReference type="ChEBI" id="CHEBI:29105"/>
        <label>2</label>
    </ligand>
</feature>
<feature type="binding site" evidence="1">
    <location>
        <position position="103"/>
    </location>
    <ligand>
        <name>Zn(2+)</name>
        <dbReference type="ChEBI" id="CHEBI:29105"/>
        <label>2</label>
    </ligand>
</feature>
<feature type="binding site" evidence="1">
    <location>
        <position position="111"/>
    </location>
    <ligand>
        <name>Zn(2+)</name>
        <dbReference type="ChEBI" id="CHEBI:29105"/>
        <label>2</label>
    </ligand>
</feature>
<feature type="binding site" evidence="1">
    <location>
        <begin position="185"/>
        <end position="190"/>
    </location>
    <ligand>
        <name>NAD(+)</name>
        <dbReference type="ChEBI" id="CHEBI:57540"/>
    </ligand>
</feature>
<feature type="binding site" evidence="1">
    <location>
        <position position="214"/>
    </location>
    <ligand>
        <name>NAD(+)</name>
        <dbReference type="ChEBI" id="CHEBI:57540"/>
    </ligand>
</feature>
<feature type="binding site" evidence="1">
    <location>
        <begin position="271"/>
        <end position="273"/>
    </location>
    <ligand>
        <name>NAD(+)</name>
        <dbReference type="ChEBI" id="CHEBI:57540"/>
    </ligand>
</feature>
<feature type="binding site" evidence="1">
    <location>
        <begin position="295"/>
        <end position="297"/>
    </location>
    <ligand>
        <name>NAD(+)</name>
        <dbReference type="ChEBI" id="CHEBI:57540"/>
    </ligand>
</feature>
<feature type="binding site" evidence="1">
    <location>
        <position position="340"/>
    </location>
    <ligand>
        <name>NAD(+)</name>
        <dbReference type="ChEBI" id="CHEBI:57540"/>
    </ligand>
</feature>
<proteinExistence type="evidence at protein level"/>
<accession>A0A2P1GIW4</accession>
<keyword id="KW-0017">Alkaloid metabolism</keyword>
<keyword id="KW-0479">Metal-binding</keyword>
<keyword id="KW-0520">NAD</keyword>
<keyword id="KW-0560">Oxidoreductase</keyword>
<keyword id="KW-0862">Zinc</keyword>
<organism>
    <name type="scientific">Catharanthus roseus</name>
    <name type="common">Madagascar periwinkle</name>
    <name type="synonym">Vinca rosea</name>
    <dbReference type="NCBI Taxonomy" id="4058"/>
    <lineage>
        <taxon>Eukaryota</taxon>
        <taxon>Viridiplantae</taxon>
        <taxon>Streptophyta</taxon>
        <taxon>Embryophyta</taxon>
        <taxon>Tracheophyta</taxon>
        <taxon>Spermatophyta</taxon>
        <taxon>Magnoliopsida</taxon>
        <taxon>eudicotyledons</taxon>
        <taxon>Gunneridae</taxon>
        <taxon>Pentapetalae</taxon>
        <taxon>asterids</taxon>
        <taxon>lamiids</taxon>
        <taxon>Gentianales</taxon>
        <taxon>Apocynaceae</taxon>
        <taxon>Rauvolfioideae</taxon>
        <taxon>Vinceae</taxon>
        <taxon>Catharanthinae</taxon>
        <taxon>Catharanthus</taxon>
    </lineage>
</organism>
<name>REDX1_CATRO</name>
<gene>
    <name evidence="4" type="primary">Redox1</name>
    <name type="synonym">CAD4</name>
    <name evidence="5" type="ORF">Caros018180</name>
</gene>
<sequence>MADRVKTVGWAAHDSSGFLSPFQFTRRATGEEDVRLKVLYCGVCHSDLHNIKNEMGFTSYPCVPGHEVVGEVTEVGNKVKKFIIGDKVGVGLFVDSCGECEQCVNDVETYCPKLKMAYLSIDDDGTVIQGGYSKEMVIKERYVFRWPENLPLPAGTPLLGAGSTVYSPMKYYGLDKSGQHLGVVGLGGLGHLAVKFAKAFGLKVTVISTSPSKKDEAINHLGADAFLVSTDQEQTQKAMSTMDGIIDTVSAPHALMPLFSLLKPNGKLIVVGAPNKPVELDILFLVMGRKMLGTSAVGGVKETQEMIDFAAKHGIVADVEVVEMENVNNAMERLAKGDVRYRFVLDIGNATVAV</sequence>
<protein>
    <recommendedName>
        <fullName evidence="4">Protein REDOX 1</fullName>
        <ecNumber evidence="2">1.5.1.56</ecNumber>
    </recommendedName>
    <alternativeName>
        <fullName>Cinnamyl alcohol dehydrogenase 4</fullName>
    </alternativeName>
</protein>
<evidence type="ECO:0000250" key="1">
    <source>
        <dbReference type="UniProtKB" id="P07327"/>
    </source>
</evidence>
<evidence type="ECO:0000269" key="2">
    <source>
    </source>
</evidence>
<evidence type="ECO:0000269" key="3">
    <source>
    </source>
</evidence>
<evidence type="ECO:0000303" key="4">
    <source>
    </source>
</evidence>
<evidence type="ECO:0000305" key="5"/>